<sequence>MVIQKEKKSCGQVVEEWKEFVWNPRTHQFMGRTGTSWAFILLFYLVFYGFLTAMFTLTMWVMLQTVSDHTPKYQDRLATPGLMIRPKTENLDVIVNVSDTESWDQHVQKLNKFLEPYNDSIQAQKNDVCRPGRYYEQPDNGVLNYPKRACQFNRTQLGDCSGIGDPTHYGYSTGQPCVFIKMNRVISFYAGANQSMNVTCVGKRDEDAENLGNFVMFPANGNIDLIYFPYYGKKFHVNYTQPLVAVKFLNVTPNVEVNVECRINAANIATDDERDKFAPRVAFKLRINKT</sequence>
<protein>
    <recommendedName>
        <fullName>Sodium/potassium-transporting ATPase subunit beta-2</fullName>
    </recommendedName>
    <alternativeName>
        <fullName>Sodium/potassium-dependent ATPase subunit beta-2</fullName>
    </alternativeName>
</protein>
<feature type="chain" id="PRO_0000219103" description="Sodium/potassium-transporting ATPase subunit beta-2">
    <location>
        <begin position="1"/>
        <end position="290"/>
    </location>
</feature>
<feature type="topological domain" description="Cytoplasmic" evidence="3">
    <location>
        <begin position="1"/>
        <end position="39"/>
    </location>
</feature>
<feature type="transmembrane region" description="Helical; Signal-anchor for type II membrane protein" evidence="3">
    <location>
        <begin position="40"/>
        <end position="67"/>
    </location>
</feature>
<feature type="topological domain" description="Extracellular" evidence="3">
    <location>
        <begin position="68"/>
        <end position="290"/>
    </location>
</feature>
<feature type="region of interest" description="immunoglobulin-like" evidence="1">
    <location>
        <begin position="193"/>
        <end position="289"/>
    </location>
</feature>
<feature type="glycosylation site" description="N-linked (GlcNAc...) asparagine" evidence="3">
    <location>
        <position position="96"/>
    </location>
</feature>
<feature type="glycosylation site" description="N-linked (GlcNAc...) asparagine" evidence="3">
    <location>
        <position position="118"/>
    </location>
</feature>
<feature type="glycosylation site" description="N-linked (GlcNAc...) asparagine" evidence="3">
    <location>
        <position position="153"/>
    </location>
</feature>
<feature type="glycosylation site" description="N-linked (GlcNAc...) asparagine" evidence="3">
    <location>
        <position position="193"/>
    </location>
</feature>
<feature type="glycosylation site" description="N-linked (GlcNAc...) asparagine" evidence="3">
    <location>
        <position position="197"/>
    </location>
</feature>
<feature type="glycosylation site" description="N-linked (GlcNAc...) asparagine" evidence="3">
    <location>
        <position position="238"/>
    </location>
</feature>
<feature type="disulfide bond" evidence="1">
    <location>
        <begin position="129"/>
        <end position="150"/>
    </location>
</feature>
<feature type="disulfide bond" evidence="1">
    <location>
        <begin position="160"/>
        <end position="177"/>
    </location>
</feature>
<feature type="disulfide bond" evidence="1">
    <location>
        <begin position="200"/>
        <end position="261"/>
    </location>
</feature>
<keyword id="KW-0130">Cell adhesion</keyword>
<keyword id="KW-1003">Cell membrane</keyword>
<keyword id="KW-1015">Disulfide bond</keyword>
<keyword id="KW-0325">Glycoprotein</keyword>
<keyword id="KW-0406">Ion transport</keyword>
<keyword id="KW-0472">Membrane</keyword>
<keyword id="KW-0630">Potassium</keyword>
<keyword id="KW-0633">Potassium transport</keyword>
<keyword id="KW-1185">Reference proteome</keyword>
<keyword id="KW-0735">Signal-anchor</keyword>
<keyword id="KW-0915">Sodium</keyword>
<keyword id="KW-0739">Sodium transport</keyword>
<keyword id="KW-0740">Sodium/potassium transport</keyword>
<keyword id="KW-0812">Transmembrane</keyword>
<keyword id="KW-1133">Transmembrane helix</keyword>
<keyword id="KW-0813">Transport</keyword>
<accession>Q28030</accession>
<comment type="function">
    <text>This is the non-catalytic component of the active enzyme, which catalyzes the hydrolysis of ATP coupled with the exchange of Na(+) and K(+) ions across the plasma membrane. The exact function of the beta-2 subunit is not known.</text>
</comment>
<comment type="function">
    <text evidence="1">Mediates cell adhesion of neurons and astrocytes, and promotes neurite outgrowth.</text>
</comment>
<comment type="subunit">
    <text evidence="2 4">The sodium/potassium-transporting ATPase is composed of a catalytic alpha subunit, an auxiliary non-catalytic beta subunit and an additional regulatory subunit. Interacts with BSG (By similarity).</text>
</comment>
<comment type="subcellular location">
    <subcellularLocation>
        <location>Cell membrane</location>
        <topology>Single-pass type II membrane protein</topology>
    </subcellularLocation>
</comment>
<comment type="domain">
    <text evidence="1">The C-terminal lobe folds into an immunoglobulin-like domain and mediates cell adhesion properties.</text>
</comment>
<comment type="similarity">
    <text evidence="4">Belongs to the X(+)/potassium ATPases subunit beta family.</text>
</comment>
<gene>
    <name type="primary">ATP1B2</name>
</gene>
<reference key="1">
    <citation type="journal article" date="1996" name="Gene">
        <title>Expression and synthesis of the Na,K-ATPase beta 2 subunit in human retinal pigment epithelium.</title>
        <authorList>
            <person name="Ruiz A.C."/>
            <person name="Bhat S.P."/>
            <person name="Bok D."/>
        </authorList>
    </citation>
    <scope>NUCLEOTIDE SEQUENCE [MRNA] OF 1-94</scope>
    <source>
        <tissue>Retinal pigment epithelium</tissue>
    </source>
</reference>
<organism>
    <name type="scientific">Bos taurus</name>
    <name type="common">Bovine</name>
    <dbReference type="NCBI Taxonomy" id="9913"/>
    <lineage>
        <taxon>Eukaryota</taxon>
        <taxon>Metazoa</taxon>
        <taxon>Chordata</taxon>
        <taxon>Craniata</taxon>
        <taxon>Vertebrata</taxon>
        <taxon>Euteleostomi</taxon>
        <taxon>Mammalia</taxon>
        <taxon>Eutheria</taxon>
        <taxon>Laurasiatheria</taxon>
        <taxon>Artiodactyla</taxon>
        <taxon>Ruminantia</taxon>
        <taxon>Pecora</taxon>
        <taxon>Bovidae</taxon>
        <taxon>Bovinae</taxon>
        <taxon>Bos</taxon>
    </lineage>
</organism>
<dbReference type="EMBL" id="U45944">
    <property type="protein sequence ID" value="AAC48681.1"/>
    <property type="molecule type" value="mRNA"/>
</dbReference>
<dbReference type="PIR" id="JC5108">
    <property type="entry name" value="JC5108"/>
</dbReference>
<dbReference type="RefSeq" id="NP_777102.1">
    <property type="nucleotide sequence ID" value="NM_174677.2"/>
</dbReference>
<dbReference type="SMR" id="Q28030"/>
<dbReference type="BioGRID" id="159782">
    <property type="interactions" value="1"/>
</dbReference>
<dbReference type="FunCoup" id="Q28030">
    <property type="interactions" value="510"/>
</dbReference>
<dbReference type="IntAct" id="Q28030">
    <property type="interactions" value="1"/>
</dbReference>
<dbReference type="STRING" id="9913.ENSBTAP00000018181"/>
<dbReference type="GlyCosmos" id="Q28030">
    <property type="glycosylation" value="6 sites, No reported glycans"/>
</dbReference>
<dbReference type="GlyGen" id="Q28030">
    <property type="glycosylation" value="6 sites"/>
</dbReference>
<dbReference type="PaxDb" id="9913-ENSBTAP00000018181"/>
<dbReference type="GeneID" id="282562"/>
<dbReference type="KEGG" id="bta:282562"/>
<dbReference type="CTD" id="482"/>
<dbReference type="eggNOG" id="KOG3927">
    <property type="taxonomic scope" value="Eukaryota"/>
</dbReference>
<dbReference type="InParanoid" id="Q28030"/>
<dbReference type="OrthoDB" id="5912413at2759"/>
<dbReference type="Proteomes" id="UP000009136">
    <property type="component" value="Unplaced"/>
</dbReference>
<dbReference type="GO" id="GO:0005890">
    <property type="term" value="C:sodium:potassium-exchanging ATPase complex"/>
    <property type="evidence" value="ECO:0000318"/>
    <property type="project" value="GO_Central"/>
</dbReference>
<dbReference type="GO" id="GO:0001671">
    <property type="term" value="F:ATPase activator activity"/>
    <property type="evidence" value="ECO:0000318"/>
    <property type="project" value="GO_Central"/>
</dbReference>
<dbReference type="GO" id="GO:0007155">
    <property type="term" value="P:cell adhesion"/>
    <property type="evidence" value="ECO:0007669"/>
    <property type="project" value="UniProtKB-KW"/>
</dbReference>
<dbReference type="GO" id="GO:0030007">
    <property type="term" value="P:intracellular potassium ion homeostasis"/>
    <property type="evidence" value="ECO:0000318"/>
    <property type="project" value="GO_Central"/>
</dbReference>
<dbReference type="GO" id="GO:0006883">
    <property type="term" value="P:intracellular sodium ion homeostasis"/>
    <property type="evidence" value="ECO:0000318"/>
    <property type="project" value="GO_Central"/>
</dbReference>
<dbReference type="GO" id="GO:1990573">
    <property type="term" value="P:potassium ion import across plasma membrane"/>
    <property type="evidence" value="ECO:0000318"/>
    <property type="project" value="GO_Central"/>
</dbReference>
<dbReference type="GO" id="GO:0036376">
    <property type="term" value="P:sodium ion export across plasma membrane"/>
    <property type="evidence" value="ECO:0000318"/>
    <property type="project" value="GO_Central"/>
</dbReference>
<dbReference type="FunFam" id="1.20.5.170:FF:000068">
    <property type="entry name" value="Sodium/potassium-transporting ATPase subunit beta"/>
    <property type="match status" value="1"/>
</dbReference>
<dbReference type="FunFam" id="2.60.40.1660:FF:000003">
    <property type="entry name" value="Sodium/potassium-transporting ATPase subunit beta"/>
    <property type="match status" value="1"/>
</dbReference>
<dbReference type="Gene3D" id="1.20.5.170">
    <property type="match status" value="1"/>
</dbReference>
<dbReference type="Gene3D" id="2.60.40.1660">
    <property type="entry name" value="Na, k-atpase alpha subunit"/>
    <property type="match status" value="1"/>
</dbReference>
<dbReference type="InterPro" id="IPR000402">
    <property type="entry name" value="Na/K_ATPase_sub_beta"/>
</dbReference>
<dbReference type="InterPro" id="IPR038702">
    <property type="entry name" value="Na/K_ATPase_sub_beta_sf"/>
</dbReference>
<dbReference type="NCBIfam" id="TIGR01107">
    <property type="entry name" value="Na_K_ATPase_bet"/>
    <property type="match status" value="1"/>
</dbReference>
<dbReference type="PANTHER" id="PTHR11523">
    <property type="entry name" value="SODIUM/POTASSIUM-DEPENDENT ATPASE BETA SUBUNIT"/>
    <property type="match status" value="1"/>
</dbReference>
<dbReference type="PANTHER" id="PTHR11523:SF26">
    <property type="entry name" value="SODIUM_POTASSIUM-TRANSPORTING ATPASE SUBUNIT BETA-2"/>
    <property type="match status" value="1"/>
</dbReference>
<dbReference type="Pfam" id="PF00287">
    <property type="entry name" value="Na_K-ATPase"/>
    <property type="match status" value="1"/>
</dbReference>
<dbReference type="PROSITE" id="PS00390">
    <property type="entry name" value="ATPASE_NA_K_BETA_1"/>
    <property type="match status" value="1"/>
</dbReference>
<dbReference type="PROSITE" id="PS00391">
    <property type="entry name" value="ATPASE_NA_K_BETA_2"/>
    <property type="match status" value="1"/>
</dbReference>
<name>AT1B2_BOVIN</name>
<proteinExistence type="evidence at transcript level"/>
<evidence type="ECO:0000250" key="1"/>
<evidence type="ECO:0000250" key="2">
    <source>
        <dbReference type="UniProtKB" id="P14231"/>
    </source>
</evidence>
<evidence type="ECO:0000255" key="3"/>
<evidence type="ECO:0000305" key="4"/>